<proteinExistence type="evidence at protein level"/>
<feature type="signal peptide" evidence="2">
    <location>
        <begin position="1"/>
        <end position="26"/>
    </location>
</feature>
<feature type="chain" id="PRO_0000430228" description="Spexin prohormone 1">
    <location>
        <begin position="27"/>
        <end position="102"/>
    </location>
</feature>
<feature type="propeptide" id="PRO_0000430229" evidence="4">
    <location>
        <begin position="27"/>
        <end position="35"/>
    </location>
</feature>
<feature type="peptide" id="PRO_0000430230" description="Spexin-1" evidence="1">
    <location>
        <begin position="36"/>
        <end position="49"/>
    </location>
</feature>
<feature type="propeptide" id="PRO_0000430231" evidence="1">
    <location>
        <begin position="50"/>
        <end position="102"/>
    </location>
</feature>
<feature type="site" description="Cleavage; by prohormone convertase 2" evidence="1">
    <location>
        <begin position="35"/>
        <end position="36"/>
    </location>
</feature>
<feature type="modified residue" description="Glutamine amide" evidence="1">
    <location>
        <position position="49"/>
    </location>
</feature>
<protein>
    <recommendedName>
        <fullName evidence="5">Spexin prohormone 1</fullName>
    </recommendedName>
    <alternativeName>
        <fullName>Spexin hormone</fullName>
    </alternativeName>
    <component>
        <recommendedName>
            <fullName>Spexin-1</fullName>
        </recommendedName>
    </component>
</protein>
<reference key="1">
    <citation type="journal article" date="2013" name="Am. J. Physiol.">
        <title>Goldfish spexin: solution structure and novel function as a satiety factor in feeding control.</title>
        <authorList>
            <person name="Wong M.K."/>
            <person name="Sze K.H."/>
            <person name="Chen T."/>
            <person name="Cho C.K."/>
            <person name="Law H.C."/>
            <person name="Chu I.K."/>
            <person name="Wong A.O."/>
        </authorList>
    </citation>
    <scope>NUCLEOTIDE SEQUENCE [GENOMIC DNA / MRNA]</scope>
    <scope>PROTEIN SEQUENCE OF 36-48</scope>
    <scope>FUNCTION (SPEXIN-1)</scope>
    <scope>TISSUE SPECIFICITY</scope>
    <source>
        <tissue>Hypothalamus</tissue>
    </source>
</reference>
<reference key="2">
    <citation type="journal article" date="2013" name="Mol. Cell. Endocrinol.">
        <title>A novel neuropeptide in suppressing luteinizing hormone release in goldfish, Carassius auratus.</title>
        <authorList>
            <person name="Liu Y."/>
            <person name="Li S."/>
            <person name="Qi X."/>
            <person name="Zhou W."/>
            <person name="Liu X."/>
            <person name="Lin H."/>
            <person name="Zhang Y."/>
            <person name="Cheng C.H."/>
        </authorList>
    </citation>
    <scope>FUNCTION (SPEXIN-1)</scope>
    <scope>INDUCTION</scope>
    <scope>TISSUE SPECIFICITY</scope>
</reference>
<sequence>MKDLRTLAAYALALLLLATFVSYSRSAPMGSFQRRNWTPQAMLYLKGTQGRRFVSEDRNEGDLYDTIRLESQSQNTENLSISKAAAFLLNVLQQARDEGEPY</sequence>
<accession>I7C2V3</accession>
<accession>I3RSB9</accession>
<evidence type="ECO:0000250" key="1"/>
<evidence type="ECO:0000255" key="2"/>
<evidence type="ECO:0000269" key="3">
    <source>
    </source>
</evidence>
<evidence type="ECO:0000269" key="4">
    <source>
    </source>
</evidence>
<evidence type="ECO:0000305" key="5"/>
<comment type="function">
    <text evidence="1">Plays a role in the regulation of food intake and body weight and in reproduction. May also play a role as a central modulator of cardiovascular and renal function and nociception (By similarity).</text>
</comment>
<comment type="function">
    <molecule>Spexin-1</molecule>
    <text evidence="3 4">Brain administration of the peptide inhibits food consumption. May function as a satiety factor for feeding control. Involved in the negative regulation of the reproductive axis by inhibiting luteinizing hormone secretion from pituitary cells (PubMed:23623870, PubMed:23715729).</text>
</comment>
<comment type="subcellular location">
    <subcellularLocation>
        <location evidence="1">Secreted</location>
    </subcellularLocation>
    <subcellularLocation>
        <location evidence="1">Secreted</location>
        <location evidence="1">Extracellular space</location>
    </subcellularLocation>
    <subcellularLocation>
        <location evidence="1">Cytoplasmic vesicle</location>
        <location evidence="1">Secretory vesicle</location>
    </subcellularLocation>
</comment>
<comment type="tissue specificity">
    <text evidence="3 4">Expressed in the anterior hypothalamus, ventromedial thalamic nucleus and medial longitudinal fasciculus of the brain (at protein level). Widely expressed. Expressed predominantly in the spleen, kidney, liver and testis. Expressed in olfactory bulb, pituitary, telencephalon, diencephalons, spinal cord, optic tectum, cerebellum and hypothalamus of the brain.</text>
</comment>
<comment type="induction">
    <text evidence="3">Up-regulated during female seasonal sexual maturation and after ovariectomy. Up-regulated by food intake in brain areas involved in appetit control.</text>
</comment>
<comment type="miscellaneous">
    <text>Amidated and nonamidated form of Spexin-1 had similar effects on food intake/feeding behaviors.</text>
</comment>
<comment type="similarity">
    <text evidence="5">Belongs to the spexin family.</text>
</comment>
<gene>
    <name type="primary">spx</name>
</gene>
<dbReference type="EMBL" id="JX035990">
    <property type="protein sequence ID" value="AFO59751.1"/>
    <property type="molecule type" value="Genomic_DNA"/>
</dbReference>
<dbReference type="EMBL" id="JQ894857">
    <property type="protein sequence ID" value="AFK29204.1"/>
    <property type="molecule type" value="mRNA"/>
</dbReference>
<dbReference type="Proteomes" id="UP000515129">
    <property type="component" value="Unplaced"/>
</dbReference>
<dbReference type="GO" id="GO:0005615">
    <property type="term" value="C:extracellular space"/>
    <property type="evidence" value="ECO:0000250"/>
    <property type="project" value="UniProtKB"/>
</dbReference>
<dbReference type="GO" id="GO:0030133">
    <property type="term" value="C:transport vesicle"/>
    <property type="evidence" value="ECO:0007669"/>
    <property type="project" value="UniProtKB-SubCell"/>
</dbReference>
<dbReference type="GO" id="GO:0005184">
    <property type="term" value="F:neuropeptide hormone activity"/>
    <property type="evidence" value="ECO:0000250"/>
    <property type="project" value="UniProtKB"/>
</dbReference>
<dbReference type="GO" id="GO:0031765">
    <property type="term" value="F:type 2 galanin receptor binding"/>
    <property type="evidence" value="ECO:0000250"/>
    <property type="project" value="UniProtKB"/>
</dbReference>
<dbReference type="GO" id="GO:0031766">
    <property type="term" value="F:type 3 galanin receptor binding"/>
    <property type="evidence" value="ECO:0000250"/>
    <property type="project" value="UniProtKB"/>
</dbReference>
<dbReference type="GO" id="GO:0044539">
    <property type="term" value="P:long-chain fatty acid import into cell"/>
    <property type="evidence" value="ECO:0000250"/>
    <property type="project" value="UniProtKB"/>
</dbReference>
<dbReference type="GO" id="GO:0032099">
    <property type="term" value="P:negative regulation of appetite"/>
    <property type="evidence" value="ECO:0000250"/>
    <property type="project" value="UniProtKB"/>
</dbReference>
<dbReference type="GO" id="GO:0010459">
    <property type="term" value="P:negative regulation of heart rate"/>
    <property type="evidence" value="ECO:0000250"/>
    <property type="project" value="UniProtKB"/>
</dbReference>
<dbReference type="GO" id="GO:0035814">
    <property type="term" value="P:negative regulation of renal sodium excretion"/>
    <property type="evidence" value="ECO:0000250"/>
    <property type="project" value="UniProtKB"/>
</dbReference>
<dbReference type="GO" id="GO:0003084">
    <property type="term" value="P:positive regulation of systemic arterial blood pressure"/>
    <property type="evidence" value="ECO:0000250"/>
    <property type="project" value="UniProtKB"/>
</dbReference>
<dbReference type="GO" id="GO:0045944">
    <property type="term" value="P:positive regulation of transcription by RNA polymerase II"/>
    <property type="evidence" value="ECO:0000250"/>
    <property type="project" value="UniProtKB"/>
</dbReference>
<dbReference type="GO" id="GO:0051930">
    <property type="term" value="P:regulation of sensory perception of pain"/>
    <property type="evidence" value="ECO:0000250"/>
    <property type="project" value="UniProtKB"/>
</dbReference>
<dbReference type="InterPro" id="IPR028126">
    <property type="entry name" value="Spexin"/>
</dbReference>
<dbReference type="PANTHER" id="PTHR28590">
    <property type="entry name" value="SPEXIN"/>
    <property type="match status" value="1"/>
</dbReference>
<dbReference type="PANTHER" id="PTHR28590:SF1">
    <property type="entry name" value="SPEXIN"/>
    <property type="match status" value="1"/>
</dbReference>
<dbReference type="Pfam" id="PF15171">
    <property type="entry name" value="Spexin"/>
    <property type="match status" value="1"/>
</dbReference>
<keyword id="KW-0027">Amidation</keyword>
<keyword id="KW-0165">Cleavage on pair of basic residues</keyword>
<keyword id="KW-0968">Cytoplasmic vesicle</keyword>
<keyword id="KW-0903">Direct protein sequencing</keyword>
<keyword id="KW-0372">Hormone</keyword>
<keyword id="KW-1185">Reference proteome</keyword>
<keyword id="KW-0964">Secreted</keyword>
<keyword id="KW-0732">Signal</keyword>
<organism>
    <name type="scientific">Carassius auratus</name>
    <name type="common">Goldfish</name>
    <dbReference type="NCBI Taxonomy" id="7957"/>
    <lineage>
        <taxon>Eukaryota</taxon>
        <taxon>Metazoa</taxon>
        <taxon>Chordata</taxon>
        <taxon>Craniata</taxon>
        <taxon>Vertebrata</taxon>
        <taxon>Euteleostomi</taxon>
        <taxon>Actinopterygii</taxon>
        <taxon>Neopterygii</taxon>
        <taxon>Teleostei</taxon>
        <taxon>Ostariophysi</taxon>
        <taxon>Cypriniformes</taxon>
        <taxon>Cyprinidae</taxon>
        <taxon>Cyprininae</taxon>
        <taxon>Carassius</taxon>
    </lineage>
</organism>
<name>SPXN_CARAU</name>